<gene>
    <name evidence="1" type="primary">rnhB</name>
    <name type="ordered locus">PEPE_0971</name>
</gene>
<feature type="chain" id="PRO_0000334932" description="Ribonuclease HII">
    <location>
        <begin position="1"/>
        <end position="255"/>
    </location>
</feature>
<feature type="domain" description="RNase H type-2" evidence="2">
    <location>
        <begin position="70"/>
        <end position="255"/>
    </location>
</feature>
<feature type="binding site" evidence="1">
    <location>
        <position position="76"/>
    </location>
    <ligand>
        <name>a divalent metal cation</name>
        <dbReference type="ChEBI" id="CHEBI:60240"/>
    </ligand>
</feature>
<feature type="binding site" evidence="1">
    <location>
        <position position="77"/>
    </location>
    <ligand>
        <name>a divalent metal cation</name>
        <dbReference type="ChEBI" id="CHEBI:60240"/>
    </ligand>
</feature>
<feature type="binding site" evidence="1">
    <location>
        <position position="168"/>
    </location>
    <ligand>
        <name>a divalent metal cation</name>
        <dbReference type="ChEBI" id="CHEBI:60240"/>
    </ligand>
</feature>
<protein>
    <recommendedName>
        <fullName evidence="1">Ribonuclease HII</fullName>
        <shortName evidence="1">RNase HII</shortName>
        <ecNumber evidence="1">3.1.26.4</ecNumber>
    </recommendedName>
</protein>
<name>RNH2_PEDPA</name>
<dbReference type="EC" id="3.1.26.4" evidence="1"/>
<dbReference type="EMBL" id="CP000422">
    <property type="protein sequence ID" value="ABJ68027.1"/>
    <property type="molecule type" value="Genomic_DNA"/>
</dbReference>
<dbReference type="RefSeq" id="WP_011673380.1">
    <property type="nucleotide sequence ID" value="NC_008525.1"/>
</dbReference>
<dbReference type="SMR" id="Q03FJ5"/>
<dbReference type="STRING" id="278197.PEPE_0971"/>
<dbReference type="GeneID" id="33062310"/>
<dbReference type="KEGG" id="ppe:PEPE_0971"/>
<dbReference type="eggNOG" id="COG0164">
    <property type="taxonomic scope" value="Bacteria"/>
</dbReference>
<dbReference type="HOGENOM" id="CLU_036532_2_1_9"/>
<dbReference type="OrthoDB" id="9803420at2"/>
<dbReference type="Proteomes" id="UP000000773">
    <property type="component" value="Chromosome"/>
</dbReference>
<dbReference type="GO" id="GO:0005737">
    <property type="term" value="C:cytoplasm"/>
    <property type="evidence" value="ECO:0007669"/>
    <property type="project" value="UniProtKB-SubCell"/>
</dbReference>
<dbReference type="GO" id="GO:0032299">
    <property type="term" value="C:ribonuclease H2 complex"/>
    <property type="evidence" value="ECO:0007669"/>
    <property type="project" value="TreeGrafter"/>
</dbReference>
<dbReference type="GO" id="GO:0030145">
    <property type="term" value="F:manganese ion binding"/>
    <property type="evidence" value="ECO:0007669"/>
    <property type="project" value="UniProtKB-UniRule"/>
</dbReference>
<dbReference type="GO" id="GO:0003723">
    <property type="term" value="F:RNA binding"/>
    <property type="evidence" value="ECO:0007669"/>
    <property type="project" value="InterPro"/>
</dbReference>
<dbReference type="GO" id="GO:0004523">
    <property type="term" value="F:RNA-DNA hybrid ribonuclease activity"/>
    <property type="evidence" value="ECO:0007669"/>
    <property type="project" value="UniProtKB-UniRule"/>
</dbReference>
<dbReference type="GO" id="GO:0043137">
    <property type="term" value="P:DNA replication, removal of RNA primer"/>
    <property type="evidence" value="ECO:0007669"/>
    <property type="project" value="TreeGrafter"/>
</dbReference>
<dbReference type="GO" id="GO:0006298">
    <property type="term" value="P:mismatch repair"/>
    <property type="evidence" value="ECO:0007669"/>
    <property type="project" value="TreeGrafter"/>
</dbReference>
<dbReference type="CDD" id="cd07182">
    <property type="entry name" value="RNase_HII_bacteria_HII_like"/>
    <property type="match status" value="1"/>
</dbReference>
<dbReference type="FunFam" id="3.30.420.10:FF:000006">
    <property type="entry name" value="Ribonuclease HII"/>
    <property type="match status" value="1"/>
</dbReference>
<dbReference type="Gene3D" id="3.30.420.10">
    <property type="entry name" value="Ribonuclease H-like superfamily/Ribonuclease H"/>
    <property type="match status" value="1"/>
</dbReference>
<dbReference type="HAMAP" id="MF_00052_B">
    <property type="entry name" value="RNase_HII_B"/>
    <property type="match status" value="1"/>
</dbReference>
<dbReference type="InterPro" id="IPR022898">
    <property type="entry name" value="RNase_HII"/>
</dbReference>
<dbReference type="InterPro" id="IPR001352">
    <property type="entry name" value="RNase_HII/HIII"/>
</dbReference>
<dbReference type="InterPro" id="IPR024567">
    <property type="entry name" value="RNase_HII/HIII_dom"/>
</dbReference>
<dbReference type="InterPro" id="IPR012337">
    <property type="entry name" value="RNaseH-like_sf"/>
</dbReference>
<dbReference type="InterPro" id="IPR036397">
    <property type="entry name" value="RNaseH_sf"/>
</dbReference>
<dbReference type="NCBIfam" id="NF000594">
    <property type="entry name" value="PRK00015.1-1"/>
    <property type="match status" value="1"/>
</dbReference>
<dbReference type="NCBIfam" id="NF000595">
    <property type="entry name" value="PRK00015.1-3"/>
    <property type="match status" value="1"/>
</dbReference>
<dbReference type="PANTHER" id="PTHR10954">
    <property type="entry name" value="RIBONUCLEASE H2 SUBUNIT A"/>
    <property type="match status" value="1"/>
</dbReference>
<dbReference type="PANTHER" id="PTHR10954:SF18">
    <property type="entry name" value="RIBONUCLEASE HII"/>
    <property type="match status" value="1"/>
</dbReference>
<dbReference type="Pfam" id="PF01351">
    <property type="entry name" value="RNase_HII"/>
    <property type="match status" value="1"/>
</dbReference>
<dbReference type="SUPFAM" id="SSF53098">
    <property type="entry name" value="Ribonuclease H-like"/>
    <property type="match status" value="1"/>
</dbReference>
<dbReference type="PROSITE" id="PS51975">
    <property type="entry name" value="RNASE_H_2"/>
    <property type="match status" value="1"/>
</dbReference>
<proteinExistence type="inferred from homology"/>
<comment type="function">
    <text evidence="1">Endonuclease that specifically degrades the RNA of RNA-DNA hybrids.</text>
</comment>
<comment type="catalytic activity">
    <reaction evidence="1">
        <text>Endonucleolytic cleavage to 5'-phosphomonoester.</text>
        <dbReference type="EC" id="3.1.26.4"/>
    </reaction>
</comment>
<comment type="cofactor">
    <cofactor evidence="1">
        <name>Mn(2+)</name>
        <dbReference type="ChEBI" id="CHEBI:29035"/>
    </cofactor>
    <cofactor evidence="1">
        <name>Mg(2+)</name>
        <dbReference type="ChEBI" id="CHEBI:18420"/>
    </cofactor>
    <text evidence="1">Manganese or magnesium. Binds 1 divalent metal ion per monomer in the absence of substrate. May bind a second metal ion after substrate binding.</text>
</comment>
<comment type="subcellular location">
    <subcellularLocation>
        <location evidence="1">Cytoplasm</location>
    </subcellularLocation>
</comment>
<comment type="similarity">
    <text evidence="1">Belongs to the RNase HII family.</text>
</comment>
<keyword id="KW-0963">Cytoplasm</keyword>
<keyword id="KW-0255">Endonuclease</keyword>
<keyword id="KW-0378">Hydrolase</keyword>
<keyword id="KW-0464">Manganese</keyword>
<keyword id="KW-0479">Metal-binding</keyword>
<keyword id="KW-0540">Nuclease</keyword>
<evidence type="ECO:0000255" key="1">
    <source>
        <dbReference type="HAMAP-Rule" id="MF_00052"/>
    </source>
</evidence>
<evidence type="ECO:0000255" key="2">
    <source>
        <dbReference type="PROSITE-ProRule" id="PRU01319"/>
    </source>
</evidence>
<sequence>MATIKEIKTQLLSVYTLDDPLLVELSEDPRTGVQRLIKHKQKEINQLRLKEEAFQARFTLERELWSNGIDLVAGIDEVGRGCLAGPVVTASVVLDETFDLIDVNDSKQLSSELREELYAKILTEAVSVGIGVCSNQKIDEVNILNATKLAMREAVGNLNVTPQHLLIDAVNAPIEIPKTVMFKGDSKSISIAAASIVAKVYRDHLMRSYAALYPGYGFDKNVGYGTKQHIEGLKTYGVTPIHRQTFEPVPEFLIK</sequence>
<reference key="1">
    <citation type="journal article" date="2006" name="Proc. Natl. Acad. Sci. U.S.A.">
        <title>Comparative genomics of the lactic acid bacteria.</title>
        <authorList>
            <person name="Makarova K.S."/>
            <person name="Slesarev A."/>
            <person name="Wolf Y.I."/>
            <person name="Sorokin A."/>
            <person name="Mirkin B."/>
            <person name="Koonin E.V."/>
            <person name="Pavlov A."/>
            <person name="Pavlova N."/>
            <person name="Karamychev V."/>
            <person name="Polouchine N."/>
            <person name="Shakhova V."/>
            <person name="Grigoriev I."/>
            <person name="Lou Y."/>
            <person name="Rohksar D."/>
            <person name="Lucas S."/>
            <person name="Huang K."/>
            <person name="Goodstein D.M."/>
            <person name="Hawkins T."/>
            <person name="Plengvidhya V."/>
            <person name="Welker D."/>
            <person name="Hughes J."/>
            <person name="Goh Y."/>
            <person name="Benson A."/>
            <person name="Baldwin K."/>
            <person name="Lee J.-H."/>
            <person name="Diaz-Muniz I."/>
            <person name="Dosti B."/>
            <person name="Smeianov V."/>
            <person name="Wechter W."/>
            <person name="Barabote R."/>
            <person name="Lorca G."/>
            <person name="Altermann E."/>
            <person name="Barrangou R."/>
            <person name="Ganesan B."/>
            <person name="Xie Y."/>
            <person name="Rawsthorne H."/>
            <person name="Tamir D."/>
            <person name="Parker C."/>
            <person name="Breidt F."/>
            <person name="Broadbent J.R."/>
            <person name="Hutkins R."/>
            <person name="O'Sullivan D."/>
            <person name="Steele J."/>
            <person name="Unlu G."/>
            <person name="Saier M.H. Jr."/>
            <person name="Klaenhammer T."/>
            <person name="Richardson P."/>
            <person name="Kozyavkin S."/>
            <person name="Weimer B.C."/>
            <person name="Mills D.A."/>
        </authorList>
    </citation>
    <scope>NUCLEOTIDE SEQUENCE [LARGE SCALE GENOMIC DNA]</scope>
    <source>
        <strain>ATCC 25745 / CCUG 21536 / LMG 10740 / 183-1w</strain>
    </source>
</reference>
<organism>
    <name type="scientific">Pediococcus pentosaceus (strain ATCC 25745 / CCUG 21536 / LMG 10740 / 183-1w)</name>
    <dbReference type="NCBI Taxonomy" id="278197"/>
    <lineage>
        <taxon>Bacteria</taxon>
        <taxon>Bacillati</taxon>
        <taxon>Bacillota</taxon>
        <taxon>Bacilli</taxon>
        <taxon>Lactobacillales</taxon>
        <taxon>Lactobacillaceae</taxon>
        <taxon>Pediococcus</taxon>
    </lineage>
</organism>
<accession>Q03FJ5</accession>